<accession>A3LP48</accession>
<comment type="subcellular location">
    <subcellularLocation>
        <location evidence="2">Membrane</location>
        <topology evidence="2">Multi-pass membrane protein</topology>
    </subcellularLocation>
</comment>
<comment type="similarity">
    <text evidence="2">Belongs to the AIM11 family.</text>
</comment>
<evidence type="ECO:0000255" key="1"/>
<evidence type="ECO:0000305" key="2"/>
<name>AIM11_PICST</name>
<feature type="chain" id="PRO_0000405653" description="Altered inheritance of mitochondria protein 11">
    <location>
        <begin position="1"/>
        <end position="174"/>
    </location>
</feature>
<feature type="transmembrane region" description="Helical" evidence="1">
    <location>
        <begin position="42"/>
        <end position="59"/>
    </location>
</feature>
<feature type="transmembrane region" description="Helical" evidence="1">
    <location>
        <begin position="88"/>
        <end position="110"/>
    </location>
</feature>
<protein>
    <recommendedName>
        <fullName>Altered inheritance of mitochondria protein 11</fullName>
    </recommendedName>
</protein>
<reference key="1">
    <citation type="journal article" date="2007" name="Nat. Biotechnol.">
        <title>Genome sequence of the lignocellulose-bioconverting and xylose-fermenting yeast Pichia stipitis.</title>
        <authorList>
            <person name="Jeffries T.W."/>
            <person name="Grigoriev I.V."/>
            <person name="Grimwood J."/>
            <person name="Laplaza J.M."/>
            <person name="Aerts A."/>
            <person name="Salamov A."/>
            <person name="Schmutz J."/>
            <person name="Lindquist E."/>
            <person name="Dehal P."/>
            <person name="Shapiro H."/>
            <person name="Jin Y.-S."/>
            <person name="Passoth V."/>
            <person name="Richardson P.M."/>
        </authorList>
    </citation>
    <scope>NUCLEOTIDE SEQUENCE [LARGE SCALE GENOMIC DNA]</scope>
    <source>
        <strain>ATCC 58785 / CBS 6054 / NBRC 10063 / NRRL Y-11545</strain>
    </source>
</reference>
<sequence>MSVEAASNSSDQSGLKPFLAKYNFKLGEASDEYIARRKRQMVLFMSSAALTIFASRFAYKSTISRQYIPTLFQGNHAPPLSYNFATDAAVAVGTGTLLCGSVSSMVIFGSCWILDVSNFKEFGWKMKSMMGGYEKERELSKLPMDEESAYIQDGLNDILEGKYDFDEDGTEEGK</sequence>
<proteinExistence type="inferred from homology"/>
<keyword id="KW-0472">Membrane</keyword>
<keyword id="KW-1185">Reference proteome</keyword>
<keyword id="KW-0812">Transmembrane</keyword>
<keyword id="KW-1133">Transmembrane helix</keyword>
<organism>
    <name type="scientific">Scheffersomyces stipitis (strain ATCC 58785 / CBS 6054 / NBRC 10063 / NRRL Y-11545)</name>
    <name type="common">Yeast</name>
    <name type="synonym">Pichia stipitis</name>
    <dbReference type="NCBI Taxonomy" id="322104"/>
    <lineage>
        <taxon>Eukaryota</taxon>
        <taxon>Fungi</taxon>
        <taxon>Dikarya</taxon>
        <taxon>Ascomycota</taxon>
        <taxon>Saccharomycotina</taxon>
        <taxon>Pichiomycetes</taxon>
        <taxon>Debaryomycetaceae</taxon>
        <taxon>Scheffersomyces</taxon>
    </lineage>
</organism>
<gene>
    <name type="primary">AIM11</name>
    <name type="ORF">PICST_29820</name>
</gene>
<dbReference type="EMBL" id="CP000496">
    <property type="protein sequence ID" value="ABN64981.1"/>
    <property type="molecule type" value="Genomic_DNA"/>
</dbReference>
<dbReference type="RefSeq" id="XP_001383010.1">
    <property type="nucleotide sequence ID" value="XM_001382973.1"/>
</dbReference>
<dbReference type="FunCoup" id="A3LP48">
    <property type="interactions" value="24"/>
</dbReference>
<dbReference type="GeneID" id="4836865"/>
<dbReference type="KEGG" id="pic:PICST_29820"/>
<dbReference type="eggNOG" id="ENOG502SAK0">
    <property type="taxonomic scope" value="Eukaryota"/>
</dbReference>
<dbReference type="HOGENOM" id="CLU_118700_0_0_1"/>
<dbReference type="InParanoid" id="A3LP48"/>
<dbReference type="OMA" id="RFAYKST"/>
<dbReference type="OrthoDB" id="4088121at2759"/>
<dbReference type="Proteomes" id="UP000002258">
    <property type="component" value="Chromosome 2"/>
</dbReference>
<dbReference type="GO" id="GO:0016020">
    <property type="term" value="C:membrane"/>
    <property type="evidence" value="ECO:0007669"/>
    <property type="project" value="UniProtKB-SubCell"/>
</dbReference>
<dbReference type="GO" id="GO:0005739">
    <property type="term" value="C:mitochondrion"/>
    <property type="evidence" value="ECO:0007669"/>
    <property type="project" value="TreeGrafter"/>
</dbReference>
<dbReference type="InterPro" id="IPR038814">
    <property type="entry name" value="AIM11"/>
</dbReference>
<dbReference type="PANTHER" id="PTHR39136">
    <property type="entry name" value="ALTERED INHERITANCE OF MITOCHONDRIA PROTEIN 11"/>
    <property type="match status" value="1"/>
</dbReference>
<dbReference type="PANTHER" id="PTHR39136:SF1">
    <property type="entry name" value="ALTERED INHERITANCE OF MITOCHONDRIA PROTEIN 11"/>
    <property type="match status" value="1"/>
</dbReference>